<accession>Q9SJ78</accession>
<name>FB98_ARATH</name>
<keyword id="KW-1185">Reference proteome</keyword>
<feature type="chain" id="PRO_0000283371" description="Putative F-box protein At2g04810">
    <location>
        <begin position="1"/>
        <end position="397"/>
    </location>
</feature>
<feature type="domain" description="F-box">
    <location>
        <begin position="20"/>
        <end position="68"/>
    </location>
</feature>
<reference key="1">
    <citation type="journal article" date="1999" name="Nature">
        <title>Sequence and analysis of chromosome 2 of the plant Arabidopsis thaliana.</title>
        <authorList>
            <person name="Lin X."/>
            <person name="Kaul S."/>
            <person name="Rounsley S.D."/>
            <person name="Shea T.P."/>
            <person name="Benito M.-I."/>
            <person name="Town C.D."/>
            <person name="Fujii C.Y."/>
            <person name="Mason T.M."/>
            <person name="Bowman C.L."/>
            <person name="Barnstead M.E."/>
            <person name="Feldblyum T.V."/>
            <person name="Buell C.R."/>
            <person name="Ketchum K.A."/>
            <person name="Lee J.J."/>
            <person name="Ronning C.M."/>
            <person name="Koo H.L."/>
            <person name="Moffat K.S."/>
            <person name="Cronin L.A."/>
            <person name="Shen M."/>
            <person name="Pai G."/>
            <person name="Van Aken S."/>
            <person name="Umayam L."/>
            <person name="Tallon L.J."/>
            <person name="Gill J.E."/>
            <person name="Adams M.D."/>
            <person name="Carrera A.J."/>
            <person name="Creasy T.H."/>
            <person name="Goodman H.M."/>
            <person name="Somerville C.R."/>
            <person name="Copenhaver G.P."/>
            <person name="Preuss D."/>
            <person name="Nierman W.C."/>
            <person name="White O."/>
            <person name="Eisen J.A."/>
            <person name="Salzberg S.L."/>
            <person name="Fraser C.M."/>
            <person name="Venter J.C."/>
        </authorList>
    </citation>
    <scope>NUCLEOTIDE SEQUENCE [LARGE SCALE GENOMIC DNA]</scope>
    <source>
        <strain>cv. Columbia</strain>
    </source>
</reference>
<reference key="2">
    <citation type="journal article" date="2017" name="Plant J.">
        <title>Araport11: a complete reannotation of the Arabidopsis thaliana reference genome.</title>
        <authorList>
            <person name="Cheng C.Y."/>
            <person name="Krishnakumar V."/>
            <person name="Chan A.P."/>
            <person name="Thibaud-Nissen F."/>
            <person name="Schobel S."/>
            <person name="Town C.D."/>
        </authorList>
    </citation>
    <scope>GENOME REANNOTATION</scope>
    <source>
        <strain>cv. Columbia</strain>
    </source>
</reference>
<protein>
    <recommendedName>
        <fullName>Putative F-box protein At2g04810</fullName>
    </recommendedName>
</protein>
<dbReference type="EMBL" id="AC006955">
    <property type="protein sequence ID" value="AAD22325.1"/>
    <property type="molecule type" value="Genomic_DNA"/>
</dbReference>
<dbReference type="EMBL" id="CP002685">
    <property type="protein sequence ID" value="AEC05870.1"/>
    <property type="molecule type" value="Genomic_DNA"/>
</dbReference>
<dbReference type="PIR" id="G84461">
    <property type="entry name" value="G84461"/>
</dbReference>
<dbReference type="RefSeq" id="NP_178558.1">
    <property type="nucleotide sequence ID" value="NM_126512.1"/>
</dbReference>
<dbReference type="GlyGen" id="Q9SJ78">
    <property type="glycosylation" value="1 site"/>
</dbReference>
<dbReference type="PaxDb" id="3702-AT2G04810.1"/>
<dbReference type="ProteomicsDB" id="230825"/>
<dbReference type="EnsemblPlants" id="AT2G04810.1">
    <property type="protein sequence ID" value="AT2G04810.1"/>
    <property type="gene ID" value="AT2G04810"/>
</dbReference>
<dbReference type="GeneID" id="815025"/>
<dbReference type="Gramene" id="AT2G04810.1">
    <property type="protein sequence ID" value="AT2G04810.1"/>
    <property type="gene ID" value="AT2G04810"/>
</dbReference>
<dbReference type="KEGG" id="ath:AT2G04810"/>
<dbReference type="Araport" id="AT2G04810"/>
<dbReference type="TAIR" id="AT2G04810">
    <property type="gene designation" value="ATFDB9"/>
</dbReference>
<dbReference type="HOGENOM" id="CLU_019286_7_1_1"/>
<dbReference type="InParanoid" id="Q9SJ78"/>
<dbReference type="PhylomeDB" id="Q9SJ78"/>
<dbReference type="PRO" id="PR:Q9SJ78"/>
<dbReference type="Proteomes" id="UP000006548">
    <property type="component" value="Chromosome 2"/>
</dbReference>
<dbReference type="ExpressionAtlas" id="Q9SJ78">
    <property type="expression patterns" value="baseline and differential"/>
</dbReference>
<dbReference type="InterPro" id="IPR050942">
    <property type="entry name" value="F-box_BR-signaling"/>
</dbReference>
<dbReference type="InterPro" id="IPR005174">
    <property type="entry name" value="KIB1-4_b-propeller"/>
</dbReference>
<dbReference type="PANTHER" id="PTHR44259:SF104">
    <property type="entry name" value="F-BOX ONLY PROTEIN (DUF295)-RELATED"/>
    <property type="match status" value="1"/>
</dbReference>
<dbReference type="PANTHER" id="PTHR44259">
    <property type="entry name" value="OS07G0183000 PROTEIN-RELATED"/>
    <property type="match status" value="1"/>
</dbReference>
<dbReference type="Pfam" id="PF03478">
    <property type="entry name" value="Beta-prop_KIB1-4"/>
    <property type="match status" value="1"/>
</dbReference>
<proteinExistence type="predicted"/>
<organism>
    <name type="scientific">Arabidopsis thaliana</name>
    <name type="common">Mouse-ear cress</name>
    <dbReference type="NCBI Taxonomy" id="3702"/>
    <lineage>
        <taxon>Eukaryota</taxon>
        <taxon>Viridiplantae</taxon>
        <taxon>Streptophyta</taxon>
        <taxon>Embryophyta</taxon>
        <taxon>Tracheophyta</taxon>
        <taxon>Spermatophyta</taxon>
        <taxon>Magnoliopsida</taxon>
        <taxon>eudicotyledons</taxon>
        <taxon>Gunneridae</taxon>
        <taxon>Pentapetalae</taxon>
        <taxon>rosids</taxon>
        <taxon>malvids</taxon>
        <taxon>Brassicales</taxon>
        <taxon>Brassicaceae</taxon>
        <taxon>Camelineae</taxon>
        <taxon>Arabidopsis</taxon>
    </lineage>
</organism>
<sequence length="397" mass="46612">METCNGLMRKNKRQKVSRNSDWSKLCPDVLRKIYETLRSPVDSHRAKIVCSNWYSVWKTCVKRPLCPLRIIHQGDSPTVGDGNRKLMGFSYNSYCMASSGNWLLMVDRCLKFYIYNLLTKERIDLPSMESKIRGGQVSFKSKSNNYNFGYLVGPSRKDDIVPYDYEAVEWKKSLAVLWVDETTGDYAVAWTFMRQYLFSYIKGDYSWCNLNHNGKSLVLFDMACENNKLYLLTMDHHIKIFNFYGDFLTGEQNLYPFNFVEDPSEYVWKRKIVIRRSGEVLIVLSLKKKVQNEEKLLFYIFKMNLESRKWERVYCIGDEMLIFGRGVTALALEDLDDGIKSNSIYFVGEDVWPDHQEHEHRVSNCGFFDIATSKIEWPKKIYCFINQNQWFVGGVAY</sequence>
<gene>
    <name type="ordered locus">At2g04810</name>
    <name type="ORF">F28I8.15</name>
</gene>